<reference key="1">
    <citation type="journal article" date="1997" name="Microbiology">
        <title>The ldhA gene encoding the fermentative lactate dehydrogenase of Escherichia coli.</title>
        <authorList>
            <person name="Bunch P.K."/>
            <person name="Mat-Jan F."/>
            <person name="Lee N."/>
            <person name="Clark D.P."/>
        </authorList>
    </citation>
    <scope>NUCLEOTIDE SEQUENCE [GENOMIC DNA]</scope>
    <source>
        <strain>K12</strain>
    </source>
</reference>
<reference key="2">
    <citation type="journal article" date="1996" name="DNA Res.">
        <title>A 570-kb DNA sequence of the Escherichia coli K-12 genome corresponding to the 28.0-40.1 min region on the linkage map.</title>
        <authorList>
            <person name="Aiba H."/>
            <person name="Baba T."/>
            <person name="Fujita K."/>
            <person name="Hayashi K."/>
            <person name="Inada T."/>
            <person name="Isono K."/>
            <person name="Itoh T."/>
            <person name="Kasai H."/>
            <person name="Kashimoto K."/>
            <person name="Kimura S."/>
            <person name="Kitakawa M."/>
            <person name="Kitagawa M."/>
            <person name="Makino K."/>
            <person name="Miki T."/>
            <person name="Mizobuchi K."/>
            <person name="Mori H."/>
            <person name="Mori T."/>
            <person name="Motomura K."/>
            <person name="Nakade S."/>
            <person name="Nakamura Y."/>
            <person name="Nashimoto H."/>
            <person name="Nishio Y."/>
            <person name="Oshima T."/>
            <person name="Saito N."/>
            <person name="Sampei G."/>
            <person name="Seki Y."/>
            <person name="Sivasundaram S."/>
            <person name="Tagami H."/>
            <person name="Takeda J."/>
            <person name="Takemoto K."/>
            <person name="Takeuchi Y."/>
            <person name="Wada C."/>
            <person name="Yamamoto Y."/>
            <person name="Horiuchi T."/>
        </authorList>
    </citation>
    <scope>NUCLEOTIDE SEQUENCE [LARGE SCALE GENOMIC DNA]</scope>
    <source>
        <strain>K12 / W3110 / ATCC 27325 / DSM 5911</strain>
    </source>
</reference>
<reference key="3">
    <citation type="journal article" date="1997" name="Science">
        <title>The complete genome sequence of Escherichia coli K-12.</title>
        <authorList>
            <person name="Blattner F.R."/>
            <person name="Plunkett G. III"/>
            <person name="Bloch C.A."/>
            <person name="Perna N.T."/>
            <person name="Burland V."/>
            <person name="Riley M."/>
            <person name="Collado-Vides J."/>
            <person name="Glasner J.D."/>
            <person name="Rode C.K."/>
            <person name="Mayhew G.F."/>
            <person name="Gregor J."/>
            <person name="Davis N.W."/>
            <person name="Kirkpatrick H.A."/>
            <person name="Goeden M.A."/>
            <person name="Rose D.J."/>
            <person name="Mau B."/>
            <person name="Shao Y."/>
        </authorList>
    </citation>
    <scope>NUCLEOTIDE SEQUENCE [LARGE SCALE GENOMIC DNA]</scope>
    <source>
        <strain>K12 / MG1655 / ATCC 47076</strain>
    </source>
</reference>
<reference key="4">
    <citation type="journal article" date="2006" name="Mol. Syst. Biol.">
        <title>Highly accurate genome sequences of Escherichia coli K-12 strains MG1655 and W3110.</title>
        <authorList>
            <person name="Hayashi K."/>
            <person name="Morooka N."/>
            <person name="Yamamoto Y."/>
            <person name="Fujita K."/>
            <person name="Isono K."/>
            <person name="Choi S."/>
            <person name="Ohtsubo E."/>
            <person name="Baba T."/>
            <person name="Wanner B.L."/>
            <person name="Mori H."/>
            <person name="Horiuchi T."/>
        </authorList>
    </citation>
    <scope>NUCLEOTIDE SEQUENCE [LARGE SCALE GENOMIC DNA]</scope>
    <source>
        <strain>K12 / W3110 / ATCC 27325 / DSM 5911</strain>
    </source>
</reference>
<reference key="5">
    <citation type="unpublished observations" date="1996-03">
        <authorList>
            <person name="Rudd K.E."/>
        </authorList>
    </citation>
    <scope>IDENTIFICATION</scope>
</reference>
<organism>
    <name type="scientific">Escherichia coli (strain K12)</name>
    <dbReference type="NCBI Taxonomy" id="83333"/>
    <lineage>
        <taxon>Bacteria</taxon>
        <taxon>Pseudomonadati</taxon>
        <taxon>Pseudomonadota</taxon>
        <taxon>Gammaproteobacteria</taxon>
        <taxon>Enterobacterales</taxon>
        <taxon>Enterobacteriaceae</taxon>
        <taxon>Escherichia</taxon>
    </lineage>
</organism>
<dbReference type="EMBL" id="U36928">
    <property type="status" value="NOT_ANNOTATED_CDS"/>
    <property type="molecule type" value="Genomic_DNA"/>
</dbReference>
<dbReference type="EMBL" id="U00096">
    <property type="protein sequence ID" value="ABD18661.1"/>
    <property type="molecule type" value="Genomic_DNA"/>
</dbReference>
<dbReference type="EMBL" id="AP009048">
    <property type="protein sequence ID" value="BAA14983.2"/>
    <property type="molecule type" value="Genomic_DNA"/>
</dbReference>
<dbReference type="RefSeq" id="WP_001295715.1">
    <property type="nucleotide sequence ID" value="NZ_STEB01000005.1"/>
</dbReference>
<dbReference type="RefSeq" id="YP_588453.1">
    <property type="nucleotide sequence ID" value="NC_000913.3"/>
</dbReference>
<dbReference type="BioGRID" id="4261546">
    <property type="interactions" value="7"/>
</dbReference>
<dbReference type="FunCoup" id="P0ACW2">
    <property type="interactions" value="24"/>
</dbReference>
<dbReference type="STRING" id="511145.b4529"/>
<dbReference type="PaxDb" id="511145-b4529"/>
<dbReference type="EnsemblBacteria" id="ABD18661">
    <property type="protein sequence ID" value="ABD18661"/>
    <property type="gene ID" value="b4529"/>
</dbReference>
<dbReference type="GeneID" id="4056027"/>
<dbReference type="KEGG" id="ecj:JW5215"/>
<dbReference type="KEGG" id="eco:b4529"/>
<dbReference type="KEGG" id="ecoc:C3026_08055"/>
<dbReference type="PATRIC" id="fig|1411691.4.peg.894"/>
<dbReference type="EchoBASE" id="EB2974"/>
<dbReference type="eggNOG" id="COG3042">
    <property type="taxonomic scope" value="Bacteria"/>
</dbReference>
<dbReference type="HOGENOM" id="CLU_155318_2_1_6"/>
<dbReference type="InParanoid" id="P0ACW2"/>
<dbReference type="OMA" id="CSNEPVQ"/>
<dbReference type="OrthoDB" id="7065744at2"/>
<dbReference type="PhylomeDB" id="P0ACW2"/>
<dbReference type="BioCyc" id="EcoCyc:MONOMER0-2672"/>
<dbReference type="PRO" id="PR:P0ACW2"/>
<dbReference type="Proteomes" id="UP000000625">
    <property type="component" value="Chromosome"/>
</dbReference>
<dbReference type="InterPro" id="IPR005590">
    <property type="entry name" value="DUF333"/>
</dbReference>
<dbReference type="PANTHER" id="PTHR38008:SF1">
    <property type="entry name" value="DUF333 DOMAIN-CONTAINING PROTEIN"/>
    <property type="match status" value="1"/>
</dbReference>
<dbReference type="PANTHER" id="PTHR38008">
    <property type="entry name" value="HEMOLYSIN-RELATED"/>
    <property type="match status" value="1"/>
</dbReference>
<dbReference type="Pfam" id="PF03891">
    <property type="entry name" value="DUF333"/>
    <property type="match status" value="1"/>
</dbReference>
<dbReference type="PROSITE" id="PS51257">
    <property type="entry name" value="PROKAR_LIPOPROTEIN"/>
    <property type="match status" value="1"/>
</dbReference>
<protein>
    <recommendedName>
        <fullName>Uncharacterized protein YdbJ</fullName>
    </recommendedName>
</protein>
<feature type="signal peptide" evidence="1">
    <location>
        <begin position="1"/>
        <end position="25"/>
    </location>
</feature>
<feature type="chain" id="PRO_0000013833" description="Uncharacterized protein YdbJ">
    <location>
        <begin position="26"/>
        <end position="88"/>
    </location>
</feature>
<sequence>MRAAFWVGCAALLLSACSSEPVQQATAAHVAPGLKASMSSSGEANCAMIGGSLSVARQLDGTAIGMCALPNGKRCSEQSLAAGSCGSY</sequence>
<gene>
    <name type="primary">ydbJ</name>
    <name type="ordered locus">b4529</name>
    <name type="ordered locus">JW5215</name>
</gene>
<name>YDBJ_ECOLI</name>
<evidence type="ECO:0000255" key="1"/>
<proteinExistence type="inferred from homology"/>
<keyword id="KW-1185">Reference proteome</keyword>
<keyword id="KW-0732">Signal</keyword>
<accession>P0ACW2</accession>
<accession>P52646</accession>
<accession>Q2EER9</accession>